<protein>
    <recommendedName>
        <fullName>Galactose-3-O-sulfotransferase 4</fullName>
        <shortName>Gal3ST-4</shortName>
        <ecNumber>2.8.2.-</ecNumber>
    </recommendedName>
    <alternativeName>
        <fullName>Beta-galactose-3-O-sulfotransferase 4</fullName>
    </alternativeName>
    <alternativeName>
        <fullName>Gal-beta-1,3-GalNAc 3'-sulfotransferase</fullName>
    </alternativeName>
</protein>
<accession>Q5E9W5</accession>
<accession>Q0VCZ6</accession>
<gene>
    <name type="primary">GAL3ST4</name>
</gene>
<feature type="chain" id="PRO_0000085208" description="Galactose-3-O-sulfotransferase 4">
    <location>
        <begin position="1"/>
        <end position="483"/>
    </location>
</feature>
<feature type="topological domain" description="Cytoplasmic" evidence="2">
    <location>
        <begin position="1"/>
        <end position="18"/>
    </location>
</feature>
<feature type="transmembrane region" description="Helical; Signal-anchor for type II membrane protein" evidence="2">
    <location>
        <begin position="19"/>
        <end position="39"/>
    </location>
</feature>
<feature type="topological domain" description="Lumenal" evidence="2">
    <location>
        <begin position="40"/>
        <end position="483"/>
    </location>
</feature>
<feature type="region of interest" description="Disordered" evidence="3">
    <location>
        <begin position="225"/>
        <end position="248"/>
    </location>
</feature>
<feature type="glycosylation site" description="N-linked (GlcNAc...) asparagine" evidence="2">
    <location>
        <position position="371"/>
    </location>
</feature>
<keyword id="KW-0325">Glycoprotein</keyword>
<keyword id="KW-0333">Golgi apparatus</keyword>
<keyword id="KW-0472">Membrane</keyword>
<keyword id="KW-1185">Reference proteome</keyword>
<keyword id="KW-0735">Signal-anchor</keyword>
<keyword id="KW-0808">Transferase</keyword>
<keyword id="KW-0812">Transmembrane</keyword>
<keyword id="KW-1133">Transmembrane helix</keyword>
<proteinExistence type="evidence at transcript level"/>
<sequence length="483" mass="53830">MGVLSPTRTMRLWGPRSLGVALGVFMTIGFALQLLGGPFQRRLPGLQLRHSWASSLGPAAPSCPPRQHLVFLKTHKSGSSSVLSLLHRYGDRHGLRFALPARYQFGYPRLFQASRVKGYRPQSGGTQPPFHILCHHMRFNLKEVLQVMPSDSFFFSIVRDPAALARSAFSYYKSTSSAFRKAPSLAAFLANPRAFYRPGARGDHYARNLLWFDFGLPFPPELRTKRGNPHVSRDPNPPQLPSGAGPPAHTLDPNALFHPVPIVADGHSQMSSPASLDLGSSSFIQWNLAWLDSVFDLVLVAEYFDESLVLLADALCWGLDDVVGFMHNAQAGGGQDRSTIDDGGLTTEERQLTARARAWNNLDWALYVHFNRSLWARIKQYGQSRLDSAVAELRARREALAKHCLVGGEALDPKYITDRRFRPFQFGSGKVLGYVLRSGLSLQDQEECERLATPELQYKDKLDAKQFPPTVSLPLKTSRRPSP</sequence>
<name>G3ST4_BOVIN</name>
<comment type="function">
    <text evidence="1">Catalyzes the transfer of sulfate to beta-1,3-linked galactose residues in O-linked glycoproteins. Good substrates include asialofetuin, Gal-beta-1,3-GalNAc and Gal-beta-1,3 (GlcNAc-beta-1,6)GalNAc (By similarity).</text>
</comment>
<comment type="cofactor">
    <cofactor evidence="1">
        <name>Mn(2+)</name>
        <dbReference type="ChEBI" id="CHEBI:29035"/>
    </cofactor>
</comment>
<comment type="pathway">
    <text>Protein modification; carbohydrate sulfation.</text>
</comment>
<comment type="subcellular location">
    <subcellularLocation>
        <location evidence="4">Golgi apparatus</location>
        <location evidence="4">Golgi stack membrane</location>
        <topology evidence="4">Single-pass type II membrane protein</topology>
    </subcellularLocation>
</comment>
<comment type="similarity">
    <text evidence="4">Belongs to the galactose-3-O-sulfotransferase family.</text>
</comment>
<evidence type="ECO:0000250" key="1"/>
<evidence type="ECO:0000255" key="2"/>
<evidence type="ECO:0000256" key="3">
    <source>
        <dbReference type="SAM" id="MobiDB-lite"/>
    </source>
</evidence>
<evidence type="ECO:0000305" key="4"/>
<organism>
    <name type="scientific">Bos taurus</name>
    <name type="common">Bovine</name>
    <dbReference type="NCBI Taxonomy" id="9913"/>
    <lineage>
        <taxon>Eukaryota</taxon>
        <taxon>Metazoa</taxon>
        <taxon>Chordata</taxon>
        <taxon>Craniata</taxon>
        <taxon>Vertebrata</taxon>
        <taxon>Euteleostomi</taxon>
        <taxon>Mammalia</taxon>
        <taxon>Eutheria</taxon>
        <taxon>Laurasiatheria</taxon>
        <taxon>Artiodactyla</taxon>
        <taxon>Ruminantia</taxon>
        <taxon>Pecora</taxon>
        <taxon>Bovidae</taxon>
        <taxon>Bovinae</taxon>
        <taxon>Bos</taxon>
    </lineage>
</organism>
<reference key="1">
    <citation type="journal article" date="2005" name="BMC Genomics">
        <title>Characterization of 954 bovine full-CDS cDNA sequences.</title>
        <authorList>
            <person name="Harhay G.P."/>
            <person name="Sonstegard T.S."/>
            <person name="Keele J.W."/>
            <person name="Heaton M.P."/>
            <person name="Clawson M.L."/>
            <person name="Snelling W.M."/>
            <person name="Wiedmann R.T."/>
            <person name="Van Tassell C.P."/>
            <person name="Smith T.P.L."/>
        </authorList>
    </citation>
    <scope>NUCLEOTIDE SEQUENCE [LARGE SCALE MRNA]</scope>
</reference>
<reference key="2">
    <citation type="submission" date="2006-08" db="EMBL/GenBank/DDBJ databases">
        <authorList>
            <consortium name="NIH - Mammalian Gene Collection (MGC) project"/>
        </authorList>
    </citation>
    <scope>NUCLEOTIDE SEQUENCE [LARGE SCALE MRNA]</scope>
    <source>
        <strain>Hereford</strain>
        <tissue>Fetal skin</tissue>
    </source>
</reference>
<dbReference type="EC" id="2.8.2.-"/>
<dbReference type="EMBL" id="BT020805">
    <property type="protein sequence ID" value="AAX08822.1"/>
    <property type="molecule type" value="mRNA"/>
</dbReference>
<dbReference type="EMBL" id="BC119916">
    <property type="protein sequence ID" value="AAI19917.1"/>
    <property type="molecule type" value="mRNA"/>
</dbReference>
<dbReference type="RefSeq" id="NP_001029709.1">
    <property type="nucleotide sequence ID" value="NM_001034537.1"/>
</dbReference>
<dbReference type="FunCoup" id="Q5E9W5">
    <property type="interactions" value="45"/>
</dbReference>
<dbReference type="STRING" id="9913.ENSBTAP00000019991"/>
<dbReference type="GlyCosmos" id="Q5E9W5">
    <property type="glycosylation" value="1 site, No reported glycans"/>
</dbReference>
<dbReference type="GlyGen" id="Q5E9W5">
    <property type="glycosylation" value="1 site"/>
</dbReference>
<dbReference type="PaxDb" id="9913-ENSBTAP00000019991"/>
<dbReference type="GeneID" id="520552"/>
<dbReference type="KEGG" id="bta:520552"/>
<dbReference type="CTD" id="79690"/>
<dbReference type="eggNOG" id="ENOG502QSHR">
    <property type="taxonomic scope" value="Eukaryota"/>
</dbReference>
<dbReference type="InParanoid" id="Q5E9W5"/>
<dbReference type="OrthoDB" id="514299at2759"/>
<dbReference type="UniPathway" id="UPA00353"/>
<dbReference type="Proteomes" id="UP000009136">
    <property type="component" value="Unplaced"/>
</dbReference>
<dbReference type="GO" id="GO:0032580">
    <property type="term" value="C:Golgi cisterna membrane"/>
    <property type="evidence" value="ECO:0007669"/>
    <property type="project" value="UniProtKB-SubCell"/>
</dbReference>
<dbReference type="GO" id="GO:0050694">
    <property type="term" value="F:galactose 3-O-sulfotransferase activity"/>
    <property type="evidence" value="ECO:0000318"/>
    <property type="project" value="GO_Central"/>
</dbReference>
<dbReference type="GO" id="GO:0001733">
    <property type="term" value="F:galactosylceramide sulfotransferase activity"/>
    <property type="evidence" value="ECO:0007669"/>
    <property type="project" value="InterPro"/>
</dbReference>
<dbReference type="GO" id="GO:0009247">
    <property type="term" value="P:glycolipid biosynthetic process"/>
    <property type="evidence" value="ECO:0007669"/>
    <property type="project" value="InterPro"/>
</dbReference>
<dbReference type="FunFam" id="3.40.50.300:FF:002733">
    <property type="entry name" value="Galactose-3-O-sulfotransferase 4"/>
    <property type="match status" value="1"/>
</dbReference>
<dbReference type="Gene3D" id="3.40.50.300">
    <property type="entry name" value="P-loop containing nucleotide triphosphate hydrolases"/>
    <property type="match status" value="1"/>
</dbReference>
<dbReference type="InterPro" id="IPR009729">
    <property type="entry name" value="Gal-3-0_sulfotransfrase"/>
</dbReference>
<dbReference type="InterPro" id="IPR027417">
    <property type="entry name" value="P-loop_NTPase"/>
</dbReference>
<dbReference type="PANTHER" id="PTHR14647">
    <property type="entry name" value="GALACTOSE-3-O-SULFOTRANSFERASE"/>
    <property type="match status" value="1"/>
</dbReference>
<dbReference type="PANTHER" id="PTHR14647:SF57">
    <property type="entry name" value="GALACTOSE-3-O-SULFOTRANSFERASE 4"/>
    <property type="match status" value="1"/>
</dbReference>
<dbReference type="Pfam" id="PF06990">
    <property type="entry name" value="Gal-3-0_sulfotr"/>
    <property type="match status" value="2"/>
</dbReference>
<dbReference type="SUPFAM" id="SSF52540">
    <property type="entry name" value="P-loop containing nucleoside triphosphate hydrolases"/>
    <property type="match status" value="1"/>
</dbReference>